<gene>
    <name type="ordered locus">MT3114</name>
</gene>
<reference key="1">
    <citation type="journal article" date="2002" name="J. Bacteriol.">
        <title>Whole-genome comparison of Mycobacterium tuberculosis clinical and laboratory strains.</title>
        <authorList>
            <person name="Fleischmann R.D."/>
            <person name="Alland D."/>
            <person name="Eisen J.A."/>
            <person name="Carpenter L."/>
            <person name="White O."/>
            <person name="Peterson J.D."/>
            <person name="DeBoy R.T."/>
            <person name="Dodson R.J."/>
            <person name="Gwinn M.L."/>
            <person name="Haft D.H."/>
            <person name="Hickey E.K."/>
            <person name="Kolonay J.F."/>
            <person name="Nelson W.C."/>
            <person name="Umayam L.A."/>
            <person name="Ermolaeva M.D."/>
            <person name="Salzberg S.L."/>
            <person name="Delcher A."/>
            <person name="Utterback T.R."/>
            <person name="Weidman J.F."/>
            <person name="Khouri H.M."/>
            <person name="Gill J."/>
            <person name="Mikula A."/>
            <person name="Bishai W."/>
            <person name="Jacobs W.R. Jr."/>
            <person name="Venter J.C."/>
            <person name="Fraser C.M."/>
        </authorList>
    </citation>
    <scope>NUCLEOTIDE SEQUENCE [LARGE SCALE GENOMIC DNA]</scope>
    <source>
        <strain>CDC 1551 / Oshkosh</strain>
    </source>
</reference>
<dbReference type="EC" id="2.1.1.-"/>
<dbReference type="EMBL" id="AE000516">
    <property type="protein sequence ID" value="AAK47444.1"/>
    <property type="molecule type" value="Genomic_DNA"/>
</dbReference>
<dbReference type="PIR" id="A70859">
    <property type="entry name" value="A70859"/>
</dbReference>
<dbReference type="RefSeq" id="WP_003415922.1">
    <property type="nucleotide sequence ID" value="NZ_KK341227.1"/>
</dbReference>
<dbReference type="SMR" id="P9WJZ0"/>
<dbReference type="KEGG" id="mtc:MT3114"/>
<dbReference type="PATRIC" id="fig|83331.31.peg.3356"/>
<dbReference type="HOGENOM" id="CLU_1077241_0_0_11"/>
<dbReference type="Proteomes" id="UP000001020">
    <property type="component" value="Chromosome"/>
</dbReference>
<dbReference type="GO" id="GO:0008757">
    <property type="term" value="F:S-adenosylmethionine-dependent methyltransferase activity"/>
    <property type="evidence" value="ECO:0007669"/>
    <property type="project" value="InterPro"/>
</dbReference>
<dbReference type="GO" id="GO:0032259">
    <property type="term" value="P:methylation"/>
    <property type="evidence" value="ECO:0007669"/>
    <property type="project" value="UniProtKB-KW"/>
</dbReference>
<dbReference type="CDD" id="cd02440">
    <property type="entry name" value="AdoMet_MTases"/>
    <property type="match status" value="1"/>
</dbReference>
<dbReference type="FunFam" id="3.40.50.150:FF:000513">
    <property type="entry name" value="S-adenosylmethionine-dependent methyltransferase"/>
    <property type="match status" value="1"/>
</dbReference>
<dbReference type="Gene3D" id="3.40.50.150">
    <property type="entry name" value="Vaccinia Virus protein VP39"/>
    <property type="match status" value="1"/>
</dbReference>
<dbReference type="InterPro" id="IPR013216">
    <property type="entry name" value="Methyltransf_11"/>
</dbReference>
<dbReference type="InterPro" id="IPR050508">
    <property type="entry name" value="Methyltransf_Superfamily"/>
</dbReference>
<dbReference type="InterPro" id="IPR029063">
    <property type="entry name" value="SAM-dependent_MTases_sf"/>
</dbReference>
<dbReference type="PANTHER" id="PTHR42912">
    <property type="entry name" value="METHYLTRANSFERASE"/>
    <property type="match status" value="1"/>
</dbReference>
<dbReference type="Pfam" id="PF08241">
    <property type="entry name" value="Methyltransf_11"/>
    <property type="match status" value="1"/>
</dbReference>
<dbReference type="SUPFAM" id="SSF53335">
    <property type="entry name" value="S-adenosyl-L-methionine-dependent methyltransferases"/>
    <property type="match status" value="1"/>
</dbReference>
<name>Y3030_MYCTO</name>
<feature type="chain" id="PRO_0000427746" description="Probable S-adenosylmethionine-dependent methyltransferase MT3114">
    <location>
        <begin position="1"/>
        <end position="274"/>
    </location>
</feature>
<feature type="region of interest" description="Disordered" evidence="2">
    <location>
        <begin position="1"/>
        <end position="24"/>
    </location>
</feature>
<organism>
    <name type="scientific">Mycobacterium tuberculosis (strain CDC 1551 / Oshkosh)</name>
    <dbReference type="NCBI Taxonomy" id="83331"/>
    <lineage>
        <taxon>Bacteria</taxon>
        <taxon>Bacillati</taxon>
        <taxon>Actinomycetota</taxon>
        <taxon>Actinomycetes</taxon>
        <taxon>Mycobacteriales</taxon>
        <taxon>Mycobacteriaceae</taxon>
        <taxon>Mycobacterium</taxon>
        <taxon>Mycobacterium tuberculosis complex</taxon>
    </lineage>
</organism>
<accession>P9WJZ0</accession>
<accession>L0TE97</accession>
<accession>O53277</accession>
<accession>Q7D695</accession>
<protein>
    <recommendedName>
        <fullName>Probable S-adenosylmethionine-dependent methyltransferase MT3114</fullName>
        <ecNumber>2.1.1.-</ecNumber>
    </recommendedName>
</protein>
<comment type="function">
    <text evidence="1">Probable S-adenosylmethionine-dependent methyltransferase required for the 6-O-methylation of the polysaccharide backbone of 6-O-methylglucosyl lipopolysaccharides (MGLP).</text>
</comment>
<comment type="similarity">
    <text evidence="3">Belongs to the methyltransferase superfamily.</text>
</comment>
<evidence type="ECO:0000250" key="1"/>
<evidence type="ECO:0000256" key="2">
    <source>
        <dbReference type="SAM" id="MobiDB-lite"/>
    </source>
</evidence>
<evidence type="ECO:0000305" key="3"/>
<keyword id="KW-0489">Methyltransferase</keyword>
<keyword id="KW-1185">Reference proteome</keyword>
<keyword id="KW-0949">S-adenosyl-L-methionine</keyword>
<keyword id="KW-0808">Transferase</keyword>
<proteinExistence type="inferred from homology"/>
<sequence>MCAFVPHVPRHSRGDNPPSASTASPAVLTLTGERTIPDLDIENYWFRRHQVVYQRLAPRCTARDVLEAGCGEGYGADLIACVARQVIAVDYDETAVAHVRSRYPRVEVMQANLAELPLPDASVDVVVNFQVIEHLWDQARFVRECARVLRGSGLLMVSTPNRITFSPGRDTPINPFHTRELNADELTSLLIDAGFVDVAMCGLFHGPRLRDMDARHGGSIIDAQIMRAVAGAPWPPELAADVAAVTTADFEMVAAGHDRDIDDSLDLIAIAVRP</sequence>